<proteinExistence type="inferred from homology"/>
<keyword id="KW-0997">Cell inner membrane</keyword>
<keyword id="KW-1003">Cell membrane</keyword>
<keyword id="KW-0472">Membrane</keyword>
<keyword id="KW-0769">Symport</keyword>
<keyword id="KW-0812">Transmembrane</keyword>
<keyword id="KW-1133">Transmembrane helix</keyword>
<keyword id="KW-0813">Transport</keyword>
<organism>
    <name type="scientific">Burkholderia pseudomallei (strain 668)</name>
    <dbReference type="NCBI Taxonomy" id="320373"/>
    <lineage>
        <taxon>Bacteria</taxon>
        <taxon>Pseudomonadati</taxon>
        <taxon>Pseudomonadota</taxon>
        <taxon>Betaproteobacteria</taxon>
        <taxon>Burkholderiales</taxon>
        <taxon>Burkholderiaceae</taxon>
        <taxon>Burkholderia</taxon>
        <taxon>pseudomallei group</taxon>
    </lineage>
</organism>
<accession>A3N588</accession>
<comment type="function">
    <text evidence="1">Responsible for the transport of dicarboxylates such as succinate, fumarate, and malate from the periplasm across the membrane.</text>
</comment>
<comment type="subcellular location">
    <subcellularLocation>
        <location evidence="1">Cell inner membrane</location>
        <topology evidence="1">Multi-pass membrane protein</topology>
    </subcellularLocation>
</comment>
<comment type="similarity">
    <text evidence="1">Belongs to the dicarboxylate/amino acid:cation symporter (DAACS) (TC 2.A.23) family.</text>
</comment>
<dbReference type="EMBL" id="CP000570">
    <property type="protein sequence ID" value="ABN82553.1"/>
    <property type="molecule type" value="Genomic_DNA"/>
</dbReference>
<dbReference type="RefSeq" id="WP_004526010.1">
    <property type="nucleotide sequence ID" value="NC_009074.1"/>
</dbReference>
<dbReference type="SMR" id="A3N588"/>
<dbReference type="KEGG" id="bpd:BURPS668_0456"/>
<dbReference type="HOGENOM" id="CLU_019375_7_0_4"/>
<dbReference type="GO" id="GO:0005886">
    <property type="term" value="C:plasma membrane"/>
    <property type="evidence" value="ECO:0007669"/>
    <property type="project" value="UniProtKB-SubCell"/>
</dbReference>
<dbReference type="GO" id="GO:0015138">
    <property type="term" value="F:fumarate transmembrane transporter activity"/>
    <property type="evidence" value="ECO:0007669"/>
    <property type="project" value="TreeGrafter"/>
</dbReference>
<dbReference type="GO" id="GO:0015366">
    <property type="term" value="F:malate:proton symporter activity"/>
    <property type="evidence" value="ECO:0007669"/>
    <property type="project" value="TreeGrafter"/>
</dbReference>
<dbReference type="GO" id="GO:0015141">
    <property type="term" value="F:succinate transmembrane transporter activity"/>
    <property type="evidence" value="ECO:0007669"/>
    <property type="project" value="TreeGrafter"/>
</dbReference>
<dbReference type="GO" id="GO:0070778">
    <property type="term" value="P:L-aspartate transmembrane transport"/>
    <property type="evidence" value="ECO:0007669"/>
    <property type="project" value="TreeGrafter"/>
</dbReference>
<dbReference type="FunFam" id="1.10.3860.10:FF:000001">
    <property type="entry name" value="C4-dicarboxylate transport protein"/>
    <property type="match status" value="1"/>
</dbReference>
<dbReference type="Gene3D" id="1.10.3860.10">
    <property type="entry name" value="Sodium:dicarboxylate symporter"/>
    <property type="match status" value="1"/>
</dbReference>
<dbReference type="HAMAP" id="MF_01300">
    <property type="entry name" value="C4_dicarb_transport"/>
    <property type="match status" value="1"/>
</dbReference>
<dbReference type="InterPro" id="IPR023954">
    <property type="entry name" value="C4_dicarb_transport"/>
</dbReference>
<dbReference type="InterPro" id="IPR001991">
    <property type="entry name" value="Na-dicarboxylate_symporter"/>
</dbReference>
<dbReference type="InterPro" id="IPR018107">
    <property type="entry name" value="Na-dicarboxylate_symporter_CS"/>
</dbReference>
<dbReference type="InterPro" id="IPR036458">
    <property type="entry name" value="Na:dicarbo_symporter_sf"/>
</dbReference>
<dbReference type="NCBIfam" id="NF002461">
    <property type="entry name" value="PRK01663.1"/>
    <property type="match status" value="1"/>
</dbReference>
<dbReference type="NCBIfam" id="NF009587">
    <property type="entry name" value="PRK13027.1"/>
    <property type="match status" value="1"/>
</dbReference>
<dbReference type="PANTHER" id="PTHR42865:SF1">
    <property type="entry name" value="AEROBIC C4-DICARBOXYLATE TRANSPORT PROTEIN"/>
    <property type="match status" value="1"/>
</dbReference>
<dbReference type="PANTHER" id="PTHR42865">
    <property type="entry name" value="PROTON/GLUTAMATE-ASPARTATE SYMPORTER"/>
    <property type="match status" value="1"/>
</dbReference>
<dbReference type="Pfam" id="PF00375">
    <property type="entry name" value="SDF"/>
    <property type="match status" value="1"/>
</dbReference>
<dbReference type="PRINTS" id="PR00173">
    <property type="entry name" value="EDTRNSPORT"/>
</dbReference>
<dbReference type="SUPFAM" id="SSF118215">
    <property type="entry name" value="Proton glutamate symport protein"/>
    <property type="match status" value="1"/>
</dbReference>
<dbReference type="PROSITE" id="PS00713">
    <property type="entry name" value="NA_DICARBOXYL_SYMP_1"/>
    <property type="match status" value="1"/>
</dbReference>
<dbReference type="PROSITE" id="PS00714">
    <property type="entry name" value="NA_DICARBOXYL_SYMP_2"/>
    <property type="match status" value="1"/>
</dbReference>
<protein>
    <recommendedName>
        <fullName evidence="1">C4-dicarboxylate transport protein</fullName>
    </recommendedName>
</protein>
<reference key="1">
    <citation type="journal article" date="2010" name="Genome Biol. Evol.">
        <title>Continuing evolution of Burkholderia mallei through genome reduction and large-scale rearrangements.</title>
        <authorList>
            <person name="Losada L."/>
            <person name="Ronning C.M."/>
            <person name="DeShazer D."/>
            <person name="Woods D."/>
            <person name="Fedorova N."/>
            <person name="Kim H.S."/>
            <person name="Shabalina S.A."/>
            <person name="Pearson T.R."/>
            <person name="Brinkac L."/>
            <person name="Tan P."/>
            <person name="Nandi T."/>
            <person name="Crabtree J."/>
            <person name="Badger J."/>
            <person name="Beckstrom-Sternberg S."/>
            <person name="Saqib M."/>
            <person name="Schutzer S.E."/>
            <person name="Keim P."/>
            <person name="Nierman W.C."/>
        </authorList>
    </citation>
    <scope>NUCLEOTIDE SEQUENCE [LARGE SCALE GENOMIC DNA]</scope>
    <source>
        <strain>668</strain>
    </source>
</reference>
<name>DCTA_BURP6</name>
<gene>
    <name evidence="1" type="primary">dctA</name>
    <name type="ordered locus">BURPS668_0456</name>
</gene>
<evidence type="ECO:0000255" key="1">
    <source>
        <dbReference type="HAMAP-Rule" id="MF_01300"/>
    </source>
</evidence>
<sequence>MKKPFYKVLYVQVIFAIVVGVILGHYYPSLAVDMKPLGDGFIKLIKMVIGPIIFCTVVTGIAGMQDMKKVGRVGGKALLYFEIVSTCALVLGLAATHILRPGVGFNIDPATLNGKEVASYAAKAHGQSSVDFLMHIIPNTMIDAFAQGEILQILLIALLFGSVLAHLGERGRVVTDFIDGITRVLFGIVHIVTKLAPIGAFGAMAFTIGKYGVGSLVPLLKLIGTFYLTSVVFVLVVLGAIARFTGFSIIRFVGYIKEELLIVLGTSSSEAALPQLMEKLEKAGCSRSVVGLVVPTGYSFNLDGTNIYMTMAVLFIAQATNIELTWMQQLTLLAVAMLTSKGASGVTGAGFITLAATLAVVPTIPLSGMVLILGIDRFMSECRALTNIVGNGVATVVVSAWEKELDRAKLRAALSGNGEAAAGEAARV</sequence>
<feature type="chain" id="PRO_1000067439" description="C4-dicarboxylate transport protein">
    <location>
        <begin position="1"/>
        <end position="428"/>
    </location>
</feature>
<feature type="transmembrane region" description="Helical" evidence="1">
    <location>
        <begin position="8"/>
        <end position="28"/>
    </location>
</feature>
<feature type="transmembrane region" description="Helical" evidence="1">
    <location>
        <begin position="44"/>
        <end position="64"/>
    </location>
</feature>
<feature type="transmembrane region" description="Helical" evidence="1">
    <location>
        <begin position="78"/>
        <end position="98"/>
    </location>
</feature>
<feature type="transmembrane region" description="Helical" evidence="1">
    <location>
        <begin position="148"/>
        <end position="168"/>
    </location>
</feature>
<feature type="transmembrane region" description="Helical" evidence="1">
    <location>
        <begin position="184"/>
        <end position="204"/>
    </location>
</feature>
<feature type="transmembrane region" description="Helical" evidence="1">
    <location>
        <begin position="222"/>
        <end position="242"/>
    </location>
</feature>
<feature type="transmembrane region" description="Helical" evidence="1">
    <location>
        <begin position="307"/>
        <end position="327"/>
    </location>
</feature>
<feature type="transmembrane region" description="Helical" evidence="1">
    <location>
        <begin position="355"/>
        <end position="375"/>
    </location>
</feature>